<reference key="1">
    <citation type="journal article" date="2009" name="J. Bacteriol.">
        <title>Genome sequence of Azotobacter vinelandii, an obligate aerobe specialized to support diverse anaerobic metabolic processes.</title>
        <authorList>
            <person name="Setubal J.C."/>
            <person name="Dos Santos P."/>
            <person name="Goldman B.S."/>
            <person name="Ertesvaag H."/>
            <person name="Espin G."/>
            <person name="Rubio L.M."/>
            <person name="Valla S."/>
            <person name="Almeida N.F."/>
            <person name="Balasubramanian D."/>
            <person name="Cromes L."/>
            <person name="Curatti L."/>
            <person name="Du Z."/>
            <person name="Godsy E."/>
            <person name="Goodner B."/>
            <person name="Hellner-Burris K."/>
            <person name="Hernandez J.A."/>
            <person name="Houmiel K."/>
            <person name="Imperial J."/>
            <person name="Kennedy C."/>
            <person name="Larson T.J."/>
            <person name="Latreille P."/>
            <person name="Ligon L.S."/>
            <person name="Lu J."/>
            <person name="Maerk M."/>
            <person name="Miller N.M."/>
            <person name="Norton S."/>
            <person name="O'Carroll I.P."/>
            <person name="Paulsen I."/>
            <person name="Raulfs E.C."/>
            <person name="Roemer R."/>
            <person name="Rosser J."/>
            <person name="Segura D."/>
            <person name="Slater S."/>
            <person name="Stricklin S.L."/>
            <person name="Studholme D.J."/>
            <person name="Sun J."/>
            <person name="Viana C.J."/>
            <person name="Wallin E."/>
            <person name="Wang B."/>
            <person name="Wheeler C."/>
            <person name="Zhu H."/>
            <person name="Dean D.R."/>
            <person name="Dixon R."/>
            <person name="Wood D."/>
        </authorList>
    </citation>
    <scope>NUCLEOTIDE SEQUENCE [LARGE SCALE GENOMIC DNA]</scope>
    <source>
        <strain>DJ / ATCC BAA-1303</strain>
    </source>
</reference>
<accession>C1DMR1</accession>
<keyword id="KW-0004">4Fe-4S</keyword>
<keyword id="KW-0963">Cytoplasm</keyword>
<keyword id="KW-0408">Iron</keyword>
<keyword id="KW-0411">Iron-sulfur</keyword>
<keyword id="KW-0479">Metal-binding</keyword>
<keyword id="KW-0949">S-adenosyl-L-methionine</keyword>
<keyword id="KW-0808">Transferase</keyword>
<protein>
    <recommendedName>
        <fullName evidence="1">Lipoyl synthase</fullName>
        <ecNumber evidence="1">2.8.1.8</ecNumber>
    </recommendedName>
    <alternativeName>
        <fullName evidence="1">Lip-syn</fullName>
        <shortName evidence="1">LS</shortName>
    </alternativeName>
    <alternativeName>
        <fullName evidence="1">Lipoate synthase</fullName>
    </alternativeName>
    <alternativeName>
        <fullName evidence="1">Lipoic acid synthase</fullName>
    </alternativeName>
    <alternativeName>
        <fullName evidence="1">Sulfur insertion protein LipA</fullName>
    </alternativeName>
</protein>
<feature type="chain" id="PRO_1000204142" description="Lipoyl synthase">
    <location>
        <begin position="1"/>
        <end position="325"/>
    </location>
</feature>
<feature type="domain" description="Radical SAM core" evidence="2">
    <location>
        <begin position="84"/>
        <end position="301"/>
    </location>
</feature>
<feature type="binding site" evidence="1">
    <location>
        <position position="72"/>
    </location>
    <ligand>
        <name>[4Fe-4S] cluster</name>
        <dbReference type="ChEBI" id="CHEBI:49883"/>
        <label>1</label>
    </ligand>
</feature>
<feature type="binding site" evidence="1">
    <location>
        <position position="77"/>
    </location>
    <ligand>
        <name>[4Fe-4S] cluster</name>
        <dbReference type="ChEBI" id="CHEBI:49883"/>
        <label>1</label>
    </ligand>
</feature>
<feature type="binding site" evidence="1">
    <location>
        <position position="83"/>
    </location>
    <ligand>
        <name>[4Fe-4S] cluster</name>
        <dbReference type="ChEBI" id="CHEBI:49883"/>
        <label>1</label>
    </ligand>
</feature>
<feature type="binding site" evidence="1">
    <location>
        <position position="98"/>
    </location>
    <ligand>
        <name>[4Fe-4S] cluster</name>
        <dbReference type="ChEBI" id="CHEBI:49883"/>
        <label>2</label>
        <note>4Fe-4S-S-AdoMet</note>
    </ligand>
</feature>
<feature type="binding site" evidence="1">
    <location>
        <position position="102"/>
    </location>
    <ligand>
        <name>[4Fe-4S] cluster</name>
        <dbReference type="ChEBI" id="CHEBI:49883"/>
        <label>2</label>
        <note>4Fe-4S-S-AdoMet</note>
    </ligand>
</feature>
<feature type="binding site" evidence="1">
    <location>
        <position position="105"/>
    </location>
    <ligand>
        <name>[4Fe-4S] cluster</name>
        <dbReference type="ChEBI" id="CHEBI:49883"/>
        <label>2</label>
        <note>4Fe-4S-S-AdoMet</note>
    </ligand>
</feature>
<feature type="binding site" evidence="1">
    <location>
        <position position="312"/>
    </location>
    <ligand>
        <name>[4Fe-4S] cluster</name>
        <dbReference type="ChEBI" id="CHEBI:49883"/>
        <label>1</label>
    </ligand>
</feature>
<evidence type="ECO:0000255" key="1">
    <source>
        <dbReference type="HAMAP-Rule" id="MF_00206"/>
    </source>
</evidence>
<evidence type="ECO:0000255" key="2">
    <source>
        <dbReference type="PROSITE-ProRule" id="PRU01266"/>
    </source>
</evidence>
<comment type="function">
    <text evidence="1">Catalyzes the radical-mediated insertion of two sulfur atoms into the C-6 and C-8 positions of the octanoyl moiety bound to the lipoyl domains of lipoate-dependent enzymes, thereby converting the octanoylated domains into lipoylated derivatives.</text>
</comment>
<comment type="catalytic activity">
    <reaction evidence="1">
        <text>[[Fe-S] cluster scaffold protein carrying a second [4Fe-4S](2+) cluster] + N(6)-octanoyl-L-lysyl-[protein] + 2 oxidized [2Fe-2S]-[ferredoxin] + 2 S-adenosyl-L-methionine + 4 H(+) = [[Fe-S] cluster scaffold protein] + N(6)-[(R)-dihydrolipoyl]-L-lysyl-[protein] + 4 Fe(3+) + 2 hydrogen sulfide + 2 5'-deoxyadenosine + 2 L-methionine + 2 reduced [2Fe-2S]-[ferredoxin]</text>
        <dbReference type="Rhea" id="RHEA:16585"/>
        <dbReference type="Rhea" id="RHEA-COMP:9928"/>
        <dbReference type="Rhea" id="RHEA-COMP:10000"/>
        <dbReference type="Rhea" id="RHEA-COMP:10001"/>
        <dbReference type="Rhea" id="RHEA-COMP:10475"/>
        <dbReference type="Rhea" id="RHEA-COMP:14568"/>
        <dbReference type="Rhea" id="RHEA-COMP:14569"/>
        <dbReference type="ChEBI" id="CHEBI:15378"/>
        <dbReference type="ChEBI" id="CHEBI:17319"/>
        <dbReference type="ChEBI" id="CHEBI:29034"/>
        <dbReference type="ChEBI" id="CHEBI:29919"/>
        <dbReference type="ChEBI" id="CHEBI:33722"/>
        <dbReference type="ChEBI" id="CHEBI:33737"/>
        <dbReference type="ChEBI" id="CHEBI:33738"/>
        <dbReference type="ChEBI" id="CHEBI:57844"/>
        <dbReference type="ChEBI" id="CHEBI:59789"/>
        <dbReference type="ChEBI" id="CHEBI:78809"/>
        <dbReference type="ChEBI" id="CHEBI:83100"/>
        <dbReference type="EC" id="2.8.1.8"/>
    </reaction>
</comment>
<comment type="cofactor">
    <cofactor evidence="1">
        <name>[4Fe-4S] cluster</name>
        <dbReference type="ChEBI" id="CHEBI:49883"/>
    </cofactor>
    <text evidence="1">Binds 2 [4Fe-4S] clusters per subunit. One cluster is coordinated with 3 cysteines and an exchangeable S-adenosyl-L-methionine.</text>
</comment>
<comment type="pathway">
    <text evidence="1">Protein modification; protein lipoylation via endogenous pathway; protein N(6)-(lipoyl)lysine from octanoyl-[acyl-carrier-protein]: step 2/2.</text>
</comment>
<comment type="subcellular location">
    <subcellularLocation>
        <location evidence="1">Cytoplasm</location>
    </subcellularLocation>
</comment>
<comment type="similarity">
    <text evidence="1">Belongs to the radical SAM superfamily. Lipoyl synthase family.</text>
</comment>
<name>LIPA_AZOVD</name>
<gene>
    <name evidence="1" type="primary">lipA</name>
    <name type="ordered locus">Avin_08460</name>
</gene>
<dbReference type="EC" id="2.8.1.8" evidence="1"/>
<dbReference type="EMBL" id="CP001157">
    <property type="protein sequence ID" value="ACO77091.1"/>
    <property type="molecule type" value="Genomic_DNA"/>
</dbReference>
<dbReference type="RefSeq" id="WP_012699516.1">
    <property type="nucleotide sequence ID" value="NC_012560.1"/>
</dbReference>
<dbReference type="SMR" id="C1DMR1"/>
<dbReference type="STRING" id="322710.Avin_08460"/>
<dbReference type="EnsemblBacteria" id="ACO77091">
    <property type="protein sequence ID" value="ACO77091"/>
    <property type="gene ID" value="Avin_08460"/>
</dbReference>
<dbReference type="GeneID" id="88184229"/>
<dbReference type="KEGG" id="avn:Avin_08460"/>
<dbReference type="eggNOG" id="COG0320">
    <property type="taxonomic scope" value="Bacteria"/>
</dbReference>
<dbReference type="HOGENOM" id="CLU_033144_2_1_6"/>
<dbReference type="OrthoDB" id="9787898at2"/>
<dbReference type="UniPathway" id="UPA00538">
    <property type="reaction ID" value="UER00593"/>
</dbReference>
<dbReference type="Proteomes" id="UP000002424">
    <property type="component" value="Chromosome"/>
</dbReference>
<dbReference type="GO" id="GO:0005737">
    <property type="term" value="C:cytoplasm"/>
    <property type="evidence" value="ECO:0007669"/>
    <property type="project" value="UniProtKB-SubCell"/>
</dbReference>
<dbReference type="GO" id="GO:0051539">
    <property type="term" value="F:4 iron, 4 sulfur cluster binding"/>
    <property type="evidence" value="ECO:0007669"/>
    <property type="project" value="UniProtKB-UniRule"/>
</dbReference>
<dbReference type="GO" id="GO:0016992">
    <property type="term" value="F:lipoate synthase activity"/>
    <property type="evidence" value="ECO:0007669"/>
    <property type="project" value="UniProtKB-UniRule"/>
</dbReference>
<dbReference type="GO" id="GO:0046872">
    <property type="term" value="F:metal ion binding"/>
    <property type="evidence" value="ECO:0007669"/>
    <property type="project" value="UniProtKB-KW"/>
</dbReference>
<dbReference type="CDD" id="cd01335">
    <property type="entry name" value="Radical_SAM"/>
    <property type="match status" value="1"/>
</dbReference>
<dbReference type="FunFam" id="3.20.20.70:FF:000023">
    <property type="entry name" value="Lipoyl synthase"/>
    <property type="match status" value="1"/>
</dbReference>
<dbReference type="Gene3D" id="3.20.20.70">
    <property type="entry name" value="Aldolase class I"/>
    <property type="match status" value="1"/>
</dbReference>
<dbReference type="HAMAP" id="MF_00206">
    <property type="entry name" value="Lipoyl_synth"/>
    <property type="match status" value="1"/>
</dbReference>
<dbReference type="InterPro" id="IPR013785">
    <property type="entry name" value="Aldolase_TIM"/>
</dbReference>
<dbReference type="InterPro" id="IPR006638">
    <property type="entry name" value="Elp3/MiaA/NifB-like_rSAM"/>
</dbReference>
<dbReference type="InterPro" id="IPR031691">
    <property type="entry name" value="LIAS_N"/>
</dbReference>
<dbReference type="InterPro" id="IPR003698">
    <property type="entry name" value="Lipoyl_synth"/>
</dbReference>
<dbReference type="InterPro" id="IPR007197">
    <property type="entry name" value="rSAM"/>
</dbReference>
<dbReference type="NCBIfam" id="TIGR00510">
    <property type="entry name" value="lipA"/>
    <property type="match status" value="1"/>
</dbReference>
<dbReference type="NCBIfam" id="NF004019">
    <property type="entry name" value="PRK05481.1"/>
    <property type="match status" value="1"/>
</dbReference>
<dbReference type="NCBIfam" id="NF009544">
    <property type="entry name" value="PRK12928.1"/>
    <property type="match status" value="1"/>
</dbReference>
<dbReference type="PANTHER" id="PTHR10949">
    <property type="entry name" value="LIPOYL SYNTHASE"/>
    <property type="match status" value="1"/>
</dbReference>
<dbReference type="PANTHER" id="PTHR10949:SF0">
    <property type="entry name" value="LIPOYL SYNTHASE, MITOCHONDRIAL"/>
    <property type="match status" value="1"/>
</dbReference>
<dbReference type="Pfam" id="PF16881">
    <property type="entry name" value="LIAS_N"/>
    <property type="match status" value="1"/>
</dbReference>
<dbReference type="Pfam" id="PF04055">
    <property type="entry name" value="Radical_SAM"/>
    <property type="match status" value="1"/>
</dbReference>
<dbReference type="PIRSF" id="PIRSF005963">
    <property type="entry name" value="Lipoyl_synth"/>
    <property type="match status" value="1"/>
</dbReference>
<dbReference type="SFLD" id="SFLDF00271">
    <property type="entry name" value="lipoyl_synthase"/>
    <property type="match status" value="1"/>
</dbReference>
<dbReference type="SFLD" id="SFLDS00029">
    <property type="entry name" value="Radical_SAM"/>
    <property type="match status" value="1"/>
</dbReference>
<dbReference type="SMART" id="SM00729">
    <property type="entry name" value="Elp3"/>
    <property type="match status" value="1"/>
</dbReference>
<dbReference type="SUPFAM" id="SSF102114">
    <property type="entry name" value="Radical SAM enzymes"/>
    <property type="match status" value="1"/>
</dbReference>
<dbReference type="PROSITE" id="PS51918">
    <property type="entry name" value="RADICAL_SAM"/>
    <property type="match status" value="1"/>
</dbReference>
<organism>
    <name type="scientific">Azotobacter vinelandii (strain DJ / ATCC BAA-1303)</name>
    <dbReference type="NCBI Taxonomy" id="322710"/>
    <lineage>
        <taxon>Bacteria</taxon>
        <taxon>Pseudomonadati</taxon>
        <taxon>Pseudomonadota</taxon>
        <taxon>Gammaproteobacteria</taxon>
        <taxon>Pseudomonadales</taxon>
        <taxon>Pseudomonadaceae</taxon>
        <taxon>Azotobacter</taxon>
    </lineage>
</organism>
<sequence>MSTTETTGKSPAKVETGVKLRGAEKVARIPVKVIPTEELPRKPDWIRVRMPASPEVERIKQLLRQHKLHSVCEEASCPNLGECFAGGTATFMIMGDICTRRCPFCDVGHGRPNPLDPDEPKNLAVAVADLRLKYVVITSVDRDDLRDGGAQHFADCLREIRRLSPGTQLETLVPDYRGRMEIALDITAAEPPDVFNHNLETVPRLYKASRPGADFEWSLDLLEAFKKRVPAVPTKSGLMLGLGETDEEVIEVMKRMREHEIDMLTLGQYLQPSRNHLAVQRFVHPDTFAWFAEEGERMGFKNVTSGPLVRSSYHADQQAHGAKGD</sequence>
<proteinExistence type="inferred from homology"/>